<evidence type="ECO:0000255" key="1">
    <source>
        <dbReference type="HAMAP-Rule" id="MF_01013"/>
    </source>
</evidence>
<sequence length="254" mass="27574">MLAKRIIPCLDVDNGRVVKGKKFLDIQDVADPVELAKRYNDEGADELVFYDITASNEQRGIFLDVVEKVAKEIAIPFMVGGGIRTTKDIHQVLRSGADKVSINSAAVQRPELIFESAQKFGSQCTVLSIDAKEIAVGKWNVFINGGRKDTGIDAIEWAKKGESYGAGEIVVNAMDADGEKNGYNLPLTTAIATAVNIPVIASGGAGNIQHFKDVLSHEIDAALAASVFHYDEIKIPALKTYLNEQEISVRRNSK</sequence>
<gene>
    <name evidence="1" type="primary">hisF</name>
    <name type="ordered locus">OB0547</name>
</gene>
<protein>
    <recommendedName>
        <fullName evidence="1">Imidazole glycerol phosphate synthase subunit HisF</fullName>
        <ecNumber evidence="1">4.3.2.10</ecNumber>
    </recommendedName>
    <alternativeName>
        <fullName evidence="1">IGP synthase cyclase subunit</fullName>
    </alternativeName>
    <alternativeName>
        <fullName evidence="1">IGP synthase subunit HisF</fullName>
    </alternativeName>
    <alternativeName>
        <fullName evidence="1">ImGP synthase subunit HisF</fullName>
        <shortName evidence="1">IGPS subunit HisF</shortName>
    </alternativeName>
</protein>
<dbReference type="EC" id="4.3.2.10" evidence="1"/>
<dbReference type="EMBL" id="BA000028">
    <property type="protein sequence ID" value="BAC12503.1"/>
    <property type="molecule type" value="Genomic_DNA"/>
</dbReference>
<dbReference type="RefSeq" id="WP_011064950.1">
    <property type="nucleotide sequence ID" value="NC_004193.1"/>
</dbReference>
<dbReference type="SMR" id="Q8ESS2"/>
<dbReference type="STRING" id="221109.gene:10732751"/>
<dbReference type="KEGG" id="oih:OB0547"/>
<dbReference type="eggNOG" id="COG0107">
    <property type="taxonomic scope" value="Bacteria"/>
</dbReference>
<dbReference type="HOGENOM" id="CLU_048577_4_0_9"/>
<dbReference type="OrthoDB" id="9781903at2"/>
<dbReference type="PhylomeDB" id="Q8ESS2"/>
<dbReference type="UniPathway" id="UPA00031">
    <property type="reaction ID" value="UER00010"/>
</dbReference>
<dbReference type="Proteomes" id="UP000000822">
    <property type="component" value="Chromosome"/>
</dbReference>
<dbReference type="GO" id="GO:0005737">
    <property type="term" value="C:cytoplasm"/>
    <property type="evidence" value="ECO:0007669"/>
    <property type="project" value="UniProtKB-SubCell"/>
</dbReference>
<dbReference type="GO" id="GO:0000107">
    <property type="term" value="F:imidazoleglycerol-phosphate synthase activity"/>
    <property type="evidence" value="ECO:0007669"/>
    <property type="project" value="UniProtKB-UniRule"/>
</dbReference>
<dbReference type="GO" id="GO:0016829">
    <property type="term" value="F:lyase activity"/>
    <property type="evidence" value="ECO:0007669"/>
    <property type="project" value="UniProtKB-KW"/>
</dbReference>
<dbReference type="GO" id="GO:0000105">
    <property type="term" value="P:L-histidine biosynthetic process"/>
    <property type="evidence" value="ECO:0007669"/>
    <property type="project" value="UniProtKB-UniRule"/>
</dbReference>
<dbReference type="CDD" id="cd04731">
    <property type="entry name" value="HisF"/>
    <property type="match status" value="1"/>
</dbReference>
<dbReference type="FunFam" id="3.20.20.70:FF:000006">
    <property type="entry name" value="Imidazole glycerol phosphate synthase subunit HisF"/>
    <property type="match status" value="1"/>
</dbReference>
<dbReference type="Gene3D" id="3.20.20.70">
    <property type="entry name" value="Aldolase class I"/>
    <property type="match status" value="1"/>
</dbReference>
<dbReference type="HAMAP" id="MF_01013">
    <property type="entry name" value="HisF"/>
    <property type="match status" value="1"/>
</dbReference>
<dbReference type="InterPro" id="IPR013785">
    <property type="entry name" value="Aldolase_TIM"/>
</dbReference>
<dbReference type="InterPro" id="IPR006062">
    <property type="entry name" value="His_biosynth"/>
</dbReference>
<dbReference type="InterPro" id="IPR004651">
    <property type="entry name" value="HisF"/>
</dbReference>
<dbReference type="InterPro" id="IPR050064">
    <property type="entry name" value="IGPS_HisA/HisF"/>
</dbReference>
<dbReference type="InterPro" id="IPR011060">
    <property type="entry name" value="RibuloseP-bd_barrel"/>
</dbReference>
<dbReference type="NCBIfam" id="TIGR00735">
    <property type="entry name" value="hisF"/>
    <property type="match status" value="1"/>
</dbReference>
<dbReference type="PANTHER" id="PTHR21235:SF2">
    <property type="entry name" value="IMIDAZOLE GLYCEROL PHOSPHATE SYNTHASE HISHF"/>
    <property type="match status" value="1"/>
</dbReference>
<dbReference type="PANTHER" id="PTHR21235">
    <property type="entry name" value="IMIDAZOLE GLYCEROL PHOSPHATE SYNTHASE SUBUNIT HISF/H IGP SYNTHASE SUBUNIT HISF/H"/>
    <property type="match status" value="1"/>
</dbReference>
<dbReference type="Pfam" id="PF00977">
    <property type="entry name" value="His_biosynth"/>
    <property type="match status" value="1"/>
</dbReference>
<dbReference type="SUPFAM" id="SSF51366">
    <property type="entry name" value="Ribulose-phoshate binding barrel"/>
    <property type="match status" value="1"/>
</dbReference>
<keyword id="KW-0028">Amino-acid biosynthesis</keyword>
<keyword id="KW-0963">Cytoplasm</keyword>
<keyword id="KW-0368">Histidine biosynthesis</keyword>
<keyword id="KW-0456">Lyase</keyword>
<keyword id="KW-1185">Reference proteome</keyword>
<comment type="function">
    <text evidence="1">IGPS catalyzes the conversion of PRFAR and glutamine to IGP, AICAR and glutamate. The HisF subunit catalyzes the cyclization activity that produces IGP and AICAR from PRFAR using the ammonia provided by the HisH subunit.</text>
</comment>
<comment type="catalytic activity">
    <reaction evidence="1">
        <text>5-[(5-phospho-1-deoxy-D-ribulos-1-ylimino)methylamino]-1-(5-phospho-beta-D-ribosyl)imidazole-4-carboxamide + L-glutamine = D-erythro-1-(imidazol-4-yl)glycerol 3-phosphate + 5-amino-1-(5-phospho-beta-D-ribosyl)imidazole-4-carboxamide + L-glutamate + H(+)</text>
        <dbReference type="Rhea" id="RHEA:24793"/>
        <dbReference type="ChEBI" id="CHEBI:15378"/>
        <dbReference type="ChEBI" id="CHEBI:29985"/>
        <dbReference type="ChEBI" id="CHEBI:58278"/>
        <dbReference type="ChEBI" id="CHEBI:58359"/>
        <dbReference type="ChEBI" id="CHEBI:58475"/>
        <dbReference type="ChEBI" id="CHEBI:58525"/>
        <dbReference type="EC" id="4.3.2.10"/>
    </reaction>
</comment>
<comment type="pathway">
    <text evidence="1">Amino-acid biosynthesis; L-histidine biosynthesis; L-histidine from 5-phospho-alpha-D-ribose 1-diphosphate: step 5/9.</text>
</comment>
<comment type="subunit">
    <text evidence="1">Heterodimer of HisH and HisF.</text>
</comment>
<comment type="subcellular location">
    <subcellularLocation>
        <location evidence="1">Cytoplasm</location>
    </subcellularLocation>
</comment>
<comment type="similarity">
    <text evidence="1">Belongs to the HisA/HisF family.</text>
</comment>
<organism>
    <name type="scientific">Oceanobacillus iheyensis (strain DSM 14371 / CIP 107618 / JCM 11309 / KCTC 3954 / HTE831)</name>
    <dbReference type="NCBI Taxonomy" id="221109"/>
    <lineage>
        <taxon>Bacteria</taxon>
        <taxon>Bacillati</taxon>
        <taxon>Bacillota</taxon>
        <taxon>Bacilli</taxon>
        <taxon>Bacillales</taxon>
        <taxon>Bacillaceae</taxon>
        <taxon>Oceanobacillus</taxon>
    </lineage>
</organism>
<feature type="chain" id="PRO_0000142193" description="Imidazole glycerol phosphate synthase subunit HisF">
    <location>
        <begin position="1"/>
        <end position="254"/>
    </location>
</feature>
<feature type="active site" evidence="1">
    <location>
        <position position="11"/>
    </location>
</feature>
<feature type="active site" evidence="1">
    <location>
        <position position="130"/>
    </location>
</feature>
<reference key="1">
    <citation type="journal article" date="2002" name="Nucleic Acids Res.">
        <title>Genome sequence of Oceanobacillus iheyensis isolated from the Iheya Ridge and its unexpected adaptive capabilities to extreme environments.</title>
        <authorList>
            <person name="Takami H."/>
            <person name="Takaki Y."/>
            <person name="Uchiyama I."/>
        </authorList>
    </citation>
    <scope>NUCLEOTIDE SEQUENCE [LARGE SCALE GENOMIC DNA]</scope>
    <source>
        <strain>DSM 14371 / CIP 107618 / JCM 11309 / KCTC 3954 / HTE831</strain>
    </source>
</reference>
<accession>Q8ESS2</accession>
<proteinExistence type="inferred from homology"/>
<name>HIS6_OCEIH</name>